<evidence type="ECO:0000255" key="1">
    <source>
        <dbReference type="HAMAP-Rule" id="MF_00362"/>
    </source>
</evidence>
<evidence type="ECO:0000256" key="2">
    <source>
        <dbReference type="SAM" id="MobiDB-lite"/>
    </source>
</evidence>
<evidence type="ECO:0000305" key="3"/>
<sequence length="194" mass="19802">MAKPEKVSAVAEITEQFKGSTAAVVTEYRGLSVGNITTLRRALGEGATYSVAKNTLVKRAAAEAGIEGLDDLFVGPTAIAFIKGEPVDAAKALKNFAKDNKALIIKGGYMDGAALSVEEVNKIADLESREILLAKLAGAMKGNLAKAAGLFNAPASQMARLAAALQEKKAAEGGAAEAPAEAATEAPAEAEAES</sequence>
<protein>
    <recommendedName>
        <fullName evidence="1">Large ribosomal subunit protein uL10</fullName>
    </recommendedName>
    <alternativeName>
        <fullName evidence="3">50S ribosomal protein L10</fullName>
    </alternativeName>
</protein>
<accession>C0ZV33</accession>
<proteinExistence type="inferred from homology"/>
<gene>
    <name evidence="1" type="primary">rplJ</name>
    <name type="ordered locus">RER_17200</name>
</gene>
<name>RL10_RHOE4</name>
<organism>
    <name type="scientific">Rhodococcus erythropolis (strain PR4 / NBRC 100887)</name>
    <dbReference type="NCBI Taxonomy" id="234621"/>
    <lineage>
        <taxon>Bacteria</taxon>
        <taxon>Bacillati</taxon>
        <taxon>Actinomycetota</taxon>
        <taxon>Actinomycetes</taxon>
        <taxon>Mycobacteriales</taxon>
        <taxon>Nocardiaceae</taxon>
        <taxon>Rhodococcus</taxon>
        <taxon>Rhodococcus erythropolis group</taxon>
    </lineage>
</organism>
<keyword id="KW-0687">Ribonucleoprotein</keyword>
<keyword id="KW-0689">Ribosomal protein</keyword>
<keyword id="KW-0694">RNA-binding</keyword>
<keyword id="KW-0699">rRNA-binding</keyword>
<comment type="function">
    <text evidence="1">Forms part of the ribosomal stalk, playing a central role in the interaction of the ribosome with GTP-bound translation factors.</text>
</comment>
<comment type="subunit">
    <text evidence="1">Part of the ribosomal stalk of the 50S ribosomal subunit. The N-terminus interacts with L11 and the large rRNA to form the base of the stalk. The C-terminus forms an elongated spine to which L12 dimers bind in a sequential fashion forming a multimeric L10(L12)X complex.</text>
</comment>
<comment type="similarity">
    <text evidence="1">Belongs to the universal ribosomal protein uL10 family.</text>
</comment>
<reference key="1">
    <citation type="submission" date="2005-03" db="EMBL/GenBank/DDBJ databases">
        <title>Comparison of the complete genome sequences of Rhodococcus erythropolis PR4 and Rhodococcus opacus B4.</title>
        <authorList>
            <person name="Takarada H."/>
            <person name="Sekine M."/>
            <person name="Hosoyama A."/>
            <person name="Yamada R."/>
            <person name="Fujisawa T."/>
            <person name="Omata S."/>
            <person name="Shimizu A."/>
            <person name="Tsukatani N."/>
            <person name="Tanikawa S."/>
            <person name="Fujita N."/>
            <person name="Harayama S."/>
        </authorList>
    </citation>
    <scope>NUCLEOTIDE SEQUENCE [LARGE SCALE GENOMIC DNA]</scope>
    <source>
        <strain>PR4 / NBRC 100887</strain>
    </source>
</reference>
<feature type="chain" id="PRO_1000205450" description="Large ribosomal subunit protein uL10">
    <location>
        <begin position="1"/>
        <end position="194"/>
    </location>
</feature>
<feature type="region of interest" description="Disordered" evidence="2">
    <location>
        <begin position="172"/>
        <end position="194"/>
    </location>
</feature>
<feature type="compositionally biased region" description="Low complexity" evidence="2">
    <location>
        <begin position="172"/>
        <end position="187"/>
    </location>
</feature>
<dbReference type="EMBL" id="AP008957">
    <property type="protein sequence ID" value="BAH32428.1"/>
    <property type="molecule type" value="Genomic_DNA"/>
</dbReference>
<dbReference type="RefSeq" id="WP_003942074.1">
    <property type="nucleotide sequence ID" value="NC_012490.1"/>
</dbReference>
<dbReference type="SMR" id="C0ZV33"/>
<dbReference type="GeneID" id="93802257"/>
<dbReference type="KEGG" id="rer:RER_17200"/>
<dbReference type="eggNOG" id="COG0244">
    <property type="taxonomic scope" value="Bacteria"/>
</dbReference>
<dbReference type="HOGENOM" id="CLU_092227_1_0_11"/>
<dbReference type="Proteomes" id="UP000002204">
    <property type="component" value="Chromosome"/>
</dbReference>
<dbReference type="GO" id="GO:0015934">
    <property type="term" value="C:large ribosomal subunit"/>
    <property type="evidence" value="ECO:0007669"/>
    <property type="project" value="InterPro"/>
</dbReference>
<dbReference type="GO" id="GO:0070180">
    <property type="term" value="F:large ribosomal subunit rRNA binding"/>
    <property type="evidence" value="ECO:0007669"/>
    <property type="project" value="UniProtKB-UniRule"/>
</dbReference>
<dbReference type="GO" id="GO:0003735">
    <property type="term" value="F:structural constituent of ribosome"/>
    <property type="evidence" value="ECO:0007669"/>
    <property type="project" value="InterPro"/>
</dbReference>
<dbReference type="GO" id="GO:0006412">
    <property type="term" value="P:translation"/>
    <property type="evidence" value="ECO:0007669"/>
    <property type="project" value="UniProtKB-UniRule"/>
</dbReference>
<dbReference type="CDD" id="cd05797">
    <property type="entry name" value="Ribosomal_L10"/>
    <property type="match status" value="1"/>
</dbReference>
<dbReference type="Gene3D" id="3.30.70.1730">
    <property type="match status" value="1"/>
</dbReference>
<dbReference type="Gene3D" id="6.10.250.290">
    <property type="match status" value="1"/>
</dbReference>
<dbReference type="HAMAP" id="MF_00362">
    <property type="entry name" value="Ribosomal_uL10"/>
    <property type="match status" value="1"/>
</dbReference>
<dbReference type="InterPro" id="IPR001790">
    <property type="entry name" value="Ribosomal_uL10"/>
</dbReference>
<dbReference type="InterPro" id="IPR043141">
    <property type="entry name" value="Ribosomal_uL10-like_sf"/>
</dbReference>
<dbReference type="InterPro" id="IPR022973">
    <property type="entry name" value="Ribosomal_uL10_bac"/>
</dbReference>
<dbReference type="InterPro" id="IPR047865">
    <property type="entry name" value="Ribosomal_uL10_bac_type"/>
</dbReference>
<dbReference type="InterPro" id="IPR002363">
    <property type="entry name" value="Ribosomal_uL10_CS_bac"/>
</dbReference>
<dbReference type="NCBIfam" id="NF000955">
    <property type="entry name" value="PRK00099.1-1"/>
    <property type="match status" value="1"/>
</dbReference>
<dbReference type="PANTHER" id="PTHR11560">
    <property type="entry name" value="39S RIBOSOMAL PROTEIN L10, MITOCHONDRIAL"/>
    <property type="match status" value="1"/>
</dbReference>
<dbReference type="Pfam" id="PF00466">
    <property type="entry name" value="Ribosomal_L10"/>
    <property type="match status" value="1"/>
</dbReference>
<dbReference type="SUPFAM" id="SSF160369">
    <property type="entry name" value="Ribosomal protein L10-like"/>
    <property type="match status" value="1"/>
</dbReference>
<dbReference type="PROSITE" id="PS01109">
    <property type="entry name" value="RIBOSOMAL_L10"/>
    <property type="match status" value="1"/>
</dbReference>